<name>SCONB_TALMQ</name>
<accession>B6Q4Z5</accession>
<sequence length="660" mass="74016">MHNENSVLRDAKESLFNPTPRKQGLPEDNTMTPYNGVRSIFDNSSDSHQLTDDHTHQERAISKAKLANENIAPFLAKHIPSQYAPLGTGISKSAGPPPRPDLKCRRQADEPSMDHLQWELQSLPQSDQQGIAHVWSLFSAAPAKQRELMLRGILAQCCFPQLSLISSSVRDLIRIDFITALPPEISFKILSYLDTASLCRAAQVSRGWKCLADDDVVWHRMCEQHIHRKCTKCGWGLPLLERKRLRASKEQIEKRALGVSVIPEASVTVQSVDATSGVKRTAEDLEASDSQTVKRQRLPIEEDTNIYKTNFRPWKDVYKDRFKVGTNWKYGRCSVKVFKGHTNGVMCLQFEDNILATGSYDTTIKIWDMETGEELRTLTGHTSGIRCLQFDETKLISGSIDRTLKVWNWRTGECISTYTGHLGGIIGLHFQNSILASGSTDKTVKIWNFEDKSTFLLRGHSDWVNAVRVDSCSRTVLSASDDCTVKLWDLDSKQCIRTFQGHVGQVQQVIPLPREFEFEEGHDASHEEDSNASVSGDESPSSQVSCSPTAAFFEGDRPAPPRYILTSALDSTIRLWETYTGRCLRTFFGHLEGVWALSADTLRIVSGAEDRMVKIWDPRTGKCERTFTGHSGPVTCVGLGDSCFVTGSEDCEVRIYSFKN</sequence>
<comment type="function">
    <text evidence="1">Component of the SCF(sconB) E3 ubiquitin ligase complex involved in the regulation of sulfur metabolite repression, probably by mediating the inactivation or degradation of the metR transcription factor.</text>
</comment>
<comment type="pathway">
    <text>Protein modification; protein ubiquitination.</text>
</comment>
<comment type="subunit">
    <text evidence="1">Component of the SCF(sconB) E3 ubiquitin ligase complex.</text>
</comment>
<comment type="similarity">
    <text evidence="4">Belongs to the WD repeat MET30/SCONB/SCON-2 family.</text>
</comment>
<evidence type="ECO:0000250" key="1"/>
<evidence type="ECO:0000255" key="2">
    <source>
        <dbReference type="PROSITE-ProRule" id="PRU00080"/>
    </source>
</evidence>
<evidence type="ECO:0000256" key="3">
    <source>
        <dbReference type="SAM" id="MobiDB-lite"/>
    </source>
</evidence>
<evidence type="ECO:0000305" key="4"/>
<protein>
    <recommendedName>
        <fullName>Probable E3 ubiquitin ligase complex SCF subunit sconB</fullName>
    </recommendedName>
    <alternativeName>
        <fullName>Sulfur controller B</fullName>
    </alternativeName>
    <alternativeName>
        <fullName>Sulfur metabolite repression control protein B</fullName>
    </alternativeName>
</protein>
<reference key="1">
    <citation type="journal article" date="2015" name="Genome Announc.">
        <title>Genome sequence of the AIDS-associated pathogen Penicillium marneffei (ATCC18224) and its near taxonomic relative Talaromyces stipitatus (ATCC10500).</title>
        <authorList>
            <person name="Nierman W.C."/>
            <person name="Fedorova-Abrams N.D."/>
            <person name="Andrianopoulos A."/>
        </authorList>
    </citation>
    <scope>NUCLEOTIDE SEQUENCE [LARGE SCALE GENOMIC DNA]</scope>
    <source>
        <strain>ATCC 18224 / CBS 334.59 / QM 7333</strain>
    </source>
</reference>
<keyword id="KW-1185">Reference proteome</keyword>
<keyword id="KW-0677">Repeat</keyword>
<keyword id="KW-0804">Transcription</keyword>
<keyword id="KW-0805">Transcription regulation</keyword>
<keyword id="KW-0833">Ubl conjugation pathway</keyword>
<keyword id="KW-0853">WD repeat</keyword>
<proteinExistence type="inferred from homology"/>
<dbReference type="EMBL" id="DS995899">
    <property type="protein sequence ID" value="EEA27338.1"/>
    <property type="molecule type" value="Genomic_DNA"/>
</dbReference>
<dbReference type="RefSeq" id="XP_002143853.1">
    <property type="nucleotide sequence ID" value="XM_002143817.1"/>
</dbReference>
<dbReference type="SMR" id="B6Q4Z5"/>
<dbReference type="STRING" id="441960.B6Q4Z5"/>
<dbReference type="VEuPathDB" id="FungiDB:PMAA_022220"/>
<dbReference type="HOGENOM" id="CLU_000288_103_1_1"/>
<dbReference type="OrthoDB" id="1571at28568"/>
<dbReference type="PhylomeDB" id="B6Q4Z5"/>
<dbReference type="UniPathway" id="UPA00143"/>
<dbReference type="Proteomes" id="UP000001294">
    <property type="component" value="Unassembled WGS sequence"/>
</dbReference>
<dbReference type="GO" id="GO:0016567">
    <property type="term" value="P:protein ubiquitination"/>
    <property type="evidence" value="ECO:0007669"/>
    <property type="project" value="UniProtKB-UniPathway"/>
</dbReference>
<dbReference type="CDD" id="cd22147">
    <property type="entry name" value="F-box_SpPof1-like"/>
    <property type="match status" value="1"/>
</dbReference>
<dbReference type="CDD" id="cd00200">
    <property type="entry name" value="WD40"/>
    <property type="match status" value="1"/>
</dbReference>
<dbReference type="FunFam" id="1.20.1280.50:FF:000016">
    <property type="entry name" value="E3 ubiquitin ligase complex SCF subunit sconB"/>
    <property type="match status" value="1"/>
</dbReference>
<dbReference type="FunFam" id="2.130.10.10:FF:000770">
    <property type="entry name" value="E3 ubiquitin ligase complex SCF subunit sconB"/>
    <property type="match status" value="1"/>
</dbReference>
<dbReference type="Gene3D" id="1.20.1280.50">
    <property type="match status" value="1"/>
</dbReference>
<dbReference type="Gene3D" id="2.130.10.10">
    <property type="entry name" value="YVTN repeat-like/Quinoprotein amine dehydrogenase"/>
    <property type="match status" value="3"/>
</dbReference>
<dbReference type="InterPro" id="IPR036047">
    <property type="entry name" value="F-box-like_dom_sf"/>
</dbReference>
<dbReference type="InterPro" id="IPR001810">
    <property type="entry name" value="F-box_dom"/>
</dbReference>
<dbReference type="InterPro" id="IPR020472">
    <property type="entry name" value="G-protein_beta_WD-40_rep"/>
</dbReference>
<dbReference type="InterPro" id="IPR011047">
    <property type="entry name" value="Quinoprotein_ADH-like_sf"/>
</dbReference>
<dbReference type="InterPro" id="IPR051075">
    <property type="entry name" value="SCF_subunit_WD-repeat"/>
</dbReference>
<dbReference type="InterPro" id="IPR015943">
    <property type="entry name" value="WD40/YVTN_repeat-like_dom_sf"/>
</dbReference>
<dbReference type="InterPro" id="IPR019775">
    <property type="entry name" value="WD40_repeat_CS"/>
</dbReference>
<dbReference type="InterPro" id="IPR001680">
    <property type="entry name" value="WD40_rpt"/>
</dbReference>
<dbReference type="PANTHER" id="PTHR19872">
    <property type="entry name" value="UBIQUITIN LIGASE SPECIFICITY FACTOR/HREP PROTEIN"/>
    <property type="match status" value="1"/>
</dbReference>
<dbReference type="PANTHER" id="PTHR19872:SF9">
    <property type="entry name" value="UBIQUITIN-BINDING SDF UBIQUITIN LIGASE COMPLEX SUBUNIT"/>
    <property type="match status" value="1"/>
</dbReference>
<dbReference type="Pfam" id="PF12937">
    <property type="entry name" value="F-box-like"/>
    <property type="match status" value="1"/>
</dbReference>
<dbReference type="Pfam" id="PF00400">
    <property type="entry name" value="WD40"/>
    <property type="match status" value="6"/>
</dbReference>
<dbReference type="PRINTS" id="PR00320">
    <property type="entry name" value="GPROTEINBRPT"/>
</dbReference>
<dbReference type="SMART" id="SM00256">
    <property type="entry name" value="FBOX"/>
    <property type="match status" value="1"/>
</dbReference>
<dbReference type="SMART" id="SM00320">
    <property type="entry name" value="WD40"/>
    <property type="match status" value="7"/>
</dbReference>
<dbReference type="SUPFAM" id="SSF81383">
    <property type="entry name" value="F-box domain"/>
    <property type="match status" value="1"/>
</dbReference>
<dbReference type="SUPFAM" id="SSF50998">
    <property type="entry name" value="Quinoprotein alcohol dehydrogenase-like"/>
    <property type="match status" value="1"/>
</dbReference>
<dbReference type="PROSITE" id="PS50181">
    <property type="entry name" value="FBOX"/>
    <property type="match status" value="1"/>
</dbReference>
<dbReference type="PROSITE" id="PS00678">
    <property type="entry name" value="WD_REPEATS_1"/>
    <property type="match status" value="4"/>
</dbReference>
<dbReference type="PROSITE" id="PS50082">
    <property type="entry name" value="WD_REPEATS_2"/>
    <property type="match status" value="7"/>
</dbReference>
<dbReference type="PROSITE" id="PS50294">
    <property type="entry name" value="WD_REPEATS_REGION"/>
    <property type="match status" value="1"/>
</dbReference>
<feature type="chain" id="PRO_0000397255" description="Probable E3 ubiquitin ligase complex SCF subunit sconB">
    <location>
        <begin position="1"/>
        <end position="660"/>
    </location>
</feature>
<feature type="domain" description="F-box" evidence="2">
    <location>
        <begin position="175"/>
        <end position="221"/>
    </location>
</feature>
<feature type="repeat" description="WD 1">
    <location>
        <begin position="340"/>
        <end position="379"/>
    </location>
</feature>
<feature type="repeat" description="WD 2">
    <location>
        <begin position="381"/>
        <end position="419"/>
    </location>
</feature>
<feature type="repeat" description="WD 3">
    <location>
        <begin position="421"/>
        <end position="457"/>
    </location>
</feature>
<feature type="repeat" description="WD 4">
    <location>
        <begin position="459"/>
        <end position="500"/>
    </location>
</feature>
<feature type="repeat" description="WD 5">
    <location>
        <begin position="542"/>
        <end position="586"/>
    </location>
</feature>
<feature type="repeat" description="WD 6">
    <location>
        <begin position="587"/>
        <end position="626"/>
    </location>
</feature>
<feature type="repeat" description="WD 7">
    <location>
        <begin position="629"/>
        <end position="660"/>
    </location>
</feature>
<feature type="region of interest" description="Disordered" evidence="3">
    <location>
        <begin position="1"/>
        <end position="34"/>
    </location>
</feature>
<feature type="region of interest" description="Disordered" evidence="3">
    <location>
        <begin position="86"/>
        <end position="108"/>
    </location>
</feature>
<feature type="region of interest" description="Disordered" evidence="3">
    <location>
        <begin position="521"/>
        <end position="553"/>
    </location>
</feature>
<feature type="compositionally biased region" description="Basic and acidic residues" evidence="3">
    <location>
        <begin position="1"/>
        <end position="13"/>
    </location>
</feature>
<feature type="compositionally biased region" description="Polar residues" evidence="3">
    <location>
        <begin position="531"/>
        <end position="548"/>
    </location>
</feature>
<gene>
    <name type="primary">sconB</name>
    <name type="ORF">PMAA_022220</name>
</gene>
<organism>
    <name type="scientific">Talaromyces marneffei (strain ATCC 18224 / CBS 334.59 / QM 7333)</name>
    <name type="common">Penicillium marneffei</name>
    <dbReference type="NCBI Taxonomy" id="441960"/>
    <lineage>
        <taxon>Eukaryota</taxon>
        <taxon>Fungi</taxon>
        <taxon>Dikarya</taxon>
        <taxon>Ascomycota</taxon>
        <taxon>Pezizomycotina</taxon>
        <taxon>Eurotiomycetes</taxon>
        <taxon>Eurotiomycetidae</taxon>
        <taxon>Eurotiales</taxon>
        <taxon>Trichocomaceae</taxon>
        <taxon>Talaromyces</taxon>
        <taxon>Talaromyces sect. Talaromyces</taxon>
    </lineage>
</organism>